<sequence length="380" mass="42850">MEPAIKYRLIKKEKHTGARLGEIVTPHGTFKTPMFMPVGTQASVKTMAPEDLKEMGAGIILSNTYHLWLRPGEDIVEKAGGLHKFMNWDRGVLTDSGGFQVFSLAKLRDISEEGVAFKSHLNGEKLFLSPEKAIHVENALGADIMMSFDECPPFFESYDYVKKSVERTSRWAERGLIAHQNPATQGLFGIVQGAGFEDLRRQSARDLVGMDFPGYSIGGLSVGESKGEMNRVLDFTTPMLPEDKPRYLMGVGSPDALIDGVIRGVDMFDCVLPTRIARNGTTMTSQGRLVVKNAKYSEDFRPLDPKCDCYVCKNYTRAYIRHLIKADETFGIHLTSYHNLYFLINLMHQVQDAIEQDNLLEFREAFFEEYGYNENNGRNF</sequence>
<proteinExistence type="inferred from homology"/>
<reference key="1">
    <citation type="journal article" date="2005" name="Nat. Biotechnol.">
        <title>The complete genome sequence of the meat-borne lactic acid bacterium Lactobacillus sakei 23K.</title>
        <authorList>
            <person name="Chaillou S."/>
            <person name="Champomier-Verges M.-C."/>
            <person name="Cornet M."/>
            <person name="Crutz-Le Coq A.-M."/>
            <person name="Dudez A.-M."/>
            <person name="Martin V."/>
            <person name="Beaufils S."/>
            <person name="Darbon-Rongere E."/>
            <person name="Bossy R."/>
            <person name="Loux V."/>
            <person name="Zagorec M."/>
        </authorList>
    </citation>
    <scope>NUCLEOTIDE SEQUENCE [LARGE SCALE GENOMIC DNA]</scope>
    <source>
        <strain>23K</strain>
    </source>
</reference>
<organism>
    <name type="scientific">Latilactobacillus sakei subsp. sakei (strain 23K)</name>
    <name type="common">Lactobacillus sakei subsp. sakei</name>
    <dbReference type="NCBI Taxonomy" id="314315"/>
    <lineage>
        <taxon>Bacteria</taxon>
        <taxon>Bacillati</taxon>
        <taxon>Bacillota</taxon>
        <taxon>Bacilli</taxon>
        <taxon>Lactobacillales</taxon>
        <taxon>Lactobacillaceae</taxon>
        <taxon>Latilactobacillus</taxon>
    </lineage>
</organism>
<keyword id="KW-0328">Glycosyltransferase</keyword>
<keyword id="KW-0479">Metal-binding</keyword>
<keyword id="KW-0671">Queuosine biosynthesis</keyword>
<keyword id="KW-1185">Reference proteome</keyword>
<keyword id="KW-0808">Transferase</keyword>
<keyword id="KW-0819">tRNA processing</keyword>
<keyword id="KW-0862">Zinc</keyword>
<name>TGT_LATSS</name>
<evidence type="ECO:0000255" key="1">
    <source>
        <dbReference type="HAMAP-Rule" id="MF_00168"/>
    </source>
</evidence>
<comment type="function">
    <text evidence="1">Catalyzes the base-exchange of a guanine (G) residue with the queuine precursor 7-aminomethyl-7-deazaguanine (PreQ1) at position 34 (anticodon wobble position) in tRNAs with GU(N) anticodons (tRNA-Asp, -Asn, -His and -Tyr). Catalysis occurs through a double-displacement mechanism. The nucleophile active site attacks the C1' of nucleotide 34 to detach the guanine base from the RNA, forming a covalent enzyme-RNA intermediate. The proton acceptor active site deprotonates the incoming PreQ1, allowing a nucleophilic attack on the C1' of the ribose to form the product. After dissociation, two additional enzymatic reactions on the tRNA convert PreQ1 to queuine (Q), resulting in the hypermodified nucleoside queuosine (7-(((4,5-cis-dihydroxy-2-cyclopenten-1-yl)amino)methyl)-7-deazaguanosine).</text>
</comment>
<comment type="catalytic activity">
    <reaction evidence="1">
        <text>7-aminomethyl-7-carbaguanine + guanosine(34) in tRNA = 7-aminomethyl-7-carbaguanosine(34) in tRNA + guanine</text>
        <dbReference type="Rhea" id="RHEA:24104"/>
        <dbReference type="Rhea" id="RHEA-COMP:10341"/>
        <dbReference type="Rhea" id="RHEA-COMP:10342"/>
        <dbReference type="ChEBI" id="CHEBI:16235"/>
        <dbReference type="ChEBI" id="CHEBI:58703"/>
        <dbReference type="ChEBI" id="CHEBI:74269"/>
        <dbReference type="ChEBI" id="CHEBI:82833"/>
        <dbReference type="EC" id="2.4.2.29"/>
    </reaction>
</comment>
<comment type="cofactor">
    <cofactor evidence="1">
        <name>Zn(2+)</name>
        <dbReference type="ChEBI" id="CHEBI:29105"/>
    </cofactor>
    <text evidence="1">Binds 1 zinc ion per subunit.</text>
</comment>
<comment type="pathway">
    <text evidence="1">tRNA modification; tRNA-queuosine biosynthesis.</text>
</comment>
<comment type="subunit">
    <text evidence="1">Homodimer. Within each dimer, one monomer is responsible for RNA recognition and catalysis, while the other monomer binds to the replacement base PreQ1.</text>
</comment>
<comment type="similarity">
    <text evidence="1">Belongs to the queuine tRNA-ribosyltransferase family.</text>
</comment>
<accession>Q38YP9</accession>
<protein>
    <recommendedName>
        <fullName evidence="1">Queuine tRNA-ribosyltransferase</fullName>
        <ecNumber evidence="1">2.4.2.29</ecNumber>
    </recommendedName>
    <alternativeName>
        <fullName evidence="1">Guanine insertion enzyme</fullName>
    </alternativeName>
    <alternativeName>
        <fullName evidence="1">tRNA-guanine transglycosylase</fullName>
    </alternativeName>
</protein>
<dbReference type="EC" id="2.4.2.29" evidence="1"/>
<dbReference type="EMBL" id="CR936503">
    <property type="protein sequence ID" value="CAI54678.1"/>
    <property type="molecule type" value="Genomic_DNA"/>
</dbReference>
<dbReference type="RefSeq" id="WP_011374086.1">
    <property type="nucleotide sequence ID" value="NC_007576.1"/>
</dbReference>
<dbReference type="SMR" id="Q38YP9"/>
<dbReference type="STRING" id="314315.LCA_0377"/>
<dbReference type="GeneID" id="57133206"/>
<dbReference type="KEGG" id="lsa:LCA_0377"/>
<dbReference type="eggNOG" id="COG0343">
    <property type="taxonomic scope" value="Bacteria"/>
</dbReference>
<dbReference type="HOGENOM" id="CLU_022060_0_1_9"/>
<dbReference type="OrthoDB" id="9805417at2"/>
<dbReference type="UniPathway" id="UPA00392"/>
<dbReference type="Proteomes" id="UP000002707">
    <property type="component" value="Chromosome"/>
</dbReference>
<dbReference type="GO" id="GO:0005829">
    <property type="term" value="C:cytosol"/>
    <property type="evidence" value="ECO:0007669"/>
    <property type="project" value="TreeGrafter"/>
</dbReference>
<dbReference type="GO" id="GO:0046872">
    <property type="term" value="F:metal ion binding"/>
    <property type="evidence" value="ECO:0007669"/>
    <property type="project" value="UniProtKB-KW"/>
</dbReference>
<dbReference type="GO" id="GO:0008479">
    <property type="term" value="F:tRNA-guanosine(34) queuine transglycosylase activity"/>
    <property type="evidence" value="ECO:0007669"/>
    <property type="project" value="UniProtKB-UniRule"/>
</dbReference>
<dbReference type="GO" id="GO:0008616">
    <property type="term" value="P:queuosine biosynthetic process"/>
    <property type="evidence" value="ECO:0007669"/>
    <property type="project" value="UniProtKB-UniRule"/>
</dbReference>
<dbReference type="GO" id="GO:0002099">
    <property type="term" value="P:tRNA wobble guanine modification"/>
    <property type="evidence" value="ECO:0007669"/>
    <property type="project" value="TreeGrafter"/>
</dbReference>
<dbReference type="GO" id="GO:0101030">
    <property type="term" value="P:tRNA-guanine transglycosylation"/>
    <property type="evidence" value="ECO:0007669"/>
    <property type="project" value="InterPro"/>
</dbReference>
<dbReference type="FunFam" id="3.20.20.105:FF:000001">
    <property type="entry name" value="Queuine tRNA-ribosyltransferase"/>
    <property type="match status" value="1"/>
</dbReference>
<dbReference type="Gene3D" id="3.20.20.105">
    <property type="entry name" value="Queuine tRNA-ribosyltransferase-like"/>
    <property type="match status" value="1"/>
</dbReference>
<dbReference type="HAMAP" id="MF_00168">
    <property type="entry name" value="Q_tRNA_Tgt"/>
    <property type="match status" value="1"/>
</dbReference>
<dbReference type="InterPro" id="IPR050076">
    <property type="entry name" value="ArchSynthase1/Queuine_TRR"/>
</dbReference>
<dbReference type="InterPro" id="IPR004803">
    <property type="entry name" value="TGT"/>
</dbReference>
<dbReference type="InterPro" id="IPR036511">
    <property type="entry name" value="TGT-like_sf"/>
</dbReference>
<dbReference type="InterPro" id="IPR002616">
    <property type="entry name" value="tRNA_ribo_trans-like"/>
</dbReference>
<dbReference type="NCBIfam" id="TIGR00430">
    <property type="entry name" value="Q_tRNA_tgt"/>
    <property type="match status" value="1"/>
</dbReference>
<dbReference type="NCBIfam" id="TIGR00449">
    <property type="entry name" value="tgt_general"/>
    <property type="match status" value="1"/>
</dbReference>
<dbReference type="PANTHER" id="PTHR46499">
    <property type="entry name" value="QUEUINE TRNA-RIBOSYLTRANSFERASE"/>
    <property type="match status" value="1"/>
</dbReference>
<dbReference type="PANTHER" id="PTHR46499:SF1">
    <property type="entry name" value="QUEUINE TRNA-RIBOSYLTRANSFERASE"/>
    <property type="match status" value="1"/>
</dbReference>
<dbReference type="Pfam" id="PF01702">
    <property type="entry name" value="TGT"/>
    <property type="match status" value="1"/>
</dbReference>
<dbReference type="SUPFAM" id="SSF51713">
    <property type="entry name" value="tRNA-guanine transglycosylase"/>
    <property type="match status" value="1"/>
</dbReference>
<gene>
    <name evidence="1" type="primary">tgt</name>
    <name type="ordered locus">LCA_0377</name>
</gene>
<feature type="chain" id="PRO_1000016810" description="Queuine tRNA-ribosyltransferase">
    <location>
        <begin position="1"/>
        <end position="380"/>
    </location>
</feature>
<feature type="region of interest" description="RNA binding" evidence="1">
    <location>
        <begin position="250"/>
        <end position="256"/>
    </location>
</feature>
<feature type="region of interest" description="RNA binding; important for wobble base 34 recognition" evidence="1">
    <location>
        <begin position="274"/>
        <end position="278"/>
    </location>
</feature>
<feature type="active site" description="Proton acceptor" evidence="1">
    <location>
        <position position="95"/>
    </location>
</feature>
<feature type="active site" description="Nucleophile" evidence="1">
    <location>
        <position position="269"/>
    </location>
</feature>
<feature type="binding site" evidence="1">
    <location>
        <begin position="95"/>
        <end position="99"/>
    </location>
    <ligand>
        <name>substrate</name>
    </ligand>
</feature>
<feature type="binding site" evidence="1">
    <location>
        <position position="149"/>
    </location>
    <ligand>
        <name>substrate</name>
    </ligand>
</feature>
<feature type="binding site" evidence="1">
    <location>
        <position position="192"/>
    </location>
    <ligand>
        <name>substrate</name>
    </ligand>
</feature>
<feature type="binding site" evidence="1">
    <location>
        <position position="219"/>
    </location>
    <ligand>
        <name>substrate</name>
    </ligand>
</feature>
<feature type="binding site" evidence="1">
    <location>
        <position position="307"/>
    </location>
    <ligand>
        <name>Zn(2+)</name>
        <dbReference type="ChEBI" id="CHEBI:29105"/>
    </ligand>
</feature>
<feature type="binding site" evidence="1">
    <location>
        <position position="309"/>
    </location>
    <ligand>
        <name>Zn(2+)</name>
        <dbReference type="ChEBI" id="CHEBI:29105"/>
    </ligand>
</feature>
<feature type="binding site" evidence="1">
    <location>
        <position position="312"/>
    </location>
    <ligand>
        <name>Zn(2+)</name>
        <dbReference type="ChEBI" id="CHEBI:29105"/>
    </ligand>
</feature>
<feature type="binding site" evidence="1">
    <location>
        <position position="338"/>
    </location>
    <ligand>
        <name>Zn(2+)</name>
        <dbReference type="ChEBI" id="CHEBI:29105"/>
    </ligand>
</feature>